<reference key="1">
    <citation type="journal article" date="2004" name="Nucleic Acids Res.">
        <title>Genome sequence of Symbiobacterium thermophilum, an uncultivable bacterium that depends on microbial commensalism.</title>
        <authorList>
            <person name="Ueda K."/>
            <person name="Yamashita A."/>
            <person name="Ishikawa J."/>
            <person name="Shimada M."/>
            <person name="Watsuji T."/>
            <person name="Morimura K."/>
            <person name="Ikeda H."/>
            <person name="Hattori M."/>
            <person name="Beppu T."/>
        </authorList>
    </citation>
    <scope>NUCLEOTIDE SEQUENCE [LARGE SCALE GENOMIC DNA]</scope>
    <source>
        <strain>DSM 24528 / JCM 14929 / IAM 14863 / T</strain>
    </source>
</reference>
<keyword id="KW-0012">Acyltransferase</keyword>
<keyword id="KW-0028">Amino-acid biosynthesis</keyword>
<keyword id="KW-0963">Cytoplasm</keyword>
<keyword id="KW-0486">Methionine biosynthesis</keyword>
<keyword id="KW-1185">Reference proteome</keyword>
<keyword id="KW-0808">Transferase</keyword>
<comment type="function">
    <text evidence="1">Transfers an acetyl group from acetyl-CoA to L-homoserine, forming acetyl-L-homoserine.</text>
</comment>
<comment type="catalytic activity">
    <reaction evidence="1">
        <text>L-homoserine + acetyl-CoA = O-acetyl-L-homoserine + CoA</text>
        <dbReference type="Rhea" id="RHEA:13701"/>
        <dbReference type="ChEBI" id="CHEBI:57287"/>
        <dbReference type="ChEBI" id="CHEBI:57288"/>
        <dbReference type="ChEBI" id="CHEBI:57476"/>
        <dbReference type="ChEBI" id="CHEBI:57716"/>
        <dbReference type="EC" id="2.3.1.31"/>
    </reaction>
</comment>
<comment type="pathway">
    <text evidence="1">Amino-acid biosynthesis; L-methionine biosynthesis via de novo pathway; O-acetyl-L-homoserine from L-homoserine: step 1/1.</text>
</comment>
<comment type="subunit">
    <text evidence="1">Homodimer.</text>
</comment>
<comment type="subcellular location">
    <subcellularLocation>
        <location evidence="1">Cytoplasm</location>
    </subcellularLocation>
</comment>
<comment type="similarity">
    <text evidence="1">Belongs to the AB hydrolase superfamily. MetX family.</text>
</comment>
<feature type="chain" id="PRO_0000155743" description="Homoserine O-acetyltransferase">
    <location>
        <begin position="1"/>
        <end position="383"/>
    </location>
</feature>
<feature type="domain" description="AB hydrolase-1" evidence="1">
    <location>
        <begin position="52"/>
        <end position="362"/>
    </location>
</feature>
<feature type="active site" description="Nucleophile" evidence="1">
    <location>
        <position position="158"/>
    </location>
</feature>
<feature type="active site" evidence="1">
    <location>
        <position position="323"/>
    </location>
</feature>
<feature type="active site" evidence="1">
    <location>
        <position position="356"/>
    </location>
</feature>
<feature type="binding site" evidence="1">
    <location>
        <position position="227"/>
    </location>
    <ligand>
        <name>substrate</name>
    </ligand>
</feature>
<feature type="binding site" evidence="1">
    <location>
        <position position="357"/>
    </location>
    <ligand>
        <name>substrate</name>
    </ligand>
</feature>
<organism>
    <name type="scientific">Symbiobacterium thermophilum (strain DSM 24528 / JCM 14929 / IAM 14863 / T)</name>
    <dbReference type="NCBI Taxonomy" id="292459"/>
    <lineage>
        <taxon>Bacteria</taxon>
        <taxon>Bacillati</taxon>
        <taxon>Bacillota</taxon>
        <taxon>Clostridia</taxon>
        <taxon>Eubacteriales</taxon>
        <taxon>Symbiobacteriaceae</taxon>
        <taxon>Symbiobacterium</taxon>
    </lineage>
</organism>
<sequence>MNAAPVPILLTQRRYARVATPENPLVLESGQRLTDVTLCYEVFGRLNPAGDNAILVCHALTGDSHVAGRYRPDDPKPGWWDDAVGPGKALDTDRYCVICSNVLGGCQGSTGPSSVNPATGRPYGLDFPLVTVRDMVRAQARLLDLLGVRRLLAVIGGSLGAMQALEWAATYPDRMRGIIPIGGAGRFHPQGIAFNEVQRQAILNDPGFLGGQYYGTPGPVRGLATARMLGMITYRSDESMWTQFGRNPQGEANPLHQGFAVAYQVESYLHYQGRKLVERFDANSYLYLTRAMDLMDLGRGRGSYEEAHARIQARVLAVGIRSDLLFPTYLQRETVELVRASGGRAEYVEMDSPWGHDAFLLDFPLIEEPIRRFLQELEAEENA</sequence>
<gene>
    <name evidence="1" type="primary">metXA</name>
    <name type="ordered locus">STH1685</name>
</gene>
<accession>Q67NS3</accession>
<proteinExistence type="inferred from homology"/>
<evidence type="ECO:0000255" key="1">
    <source>
        <dbReference type="HAMAP-Rule" id="MF_00296"/>
    </source>
</evidence>
<dbReference type="EC" id="2.3.1.31" evidence="1"/>
<dbReference type="EMBL" id="AP006840">
    <property type="protein sequence ID" value="BAD40670.1"/>
    <property type="molecule type" value="Genomic_DNA"/>
</dbReference>
<dbReference type="RefSeq" id="WP_011195813.1">
    <property type="nucleotide sequence ID" value="NC_006177.1"/>
</dbReference>
<dbReference type="SMR" id="Q67NS3"/>
<dbReference type="STRING" id="292459.STH1685"/>
<dbReference type="ESTHER" id="symth-metx">
    <property type="family name" value="Homoserine_transacetylase"/>
</dbReference>
<dbReference type="KEGG" id="sth:STH1685"/>
<dbReference type="eggNOG" id="COG2021">
    <property type="taxonomic scope" value="Bacteria"/>
</dbReference>
<dbReference type="HOGENOM" id="CLU_028760_1_2_9"/>
<dbReference type="OrthoDB" id="9800754at2"/>
<dbReference type="UniPathway" id="UPA00051">
    <property type="reaction ID" value="UER00074"/>
</dbReference>
<dbReference type="Proteomes" id="UP000000417">
    <property type="component" value="Chromosome"/>
</dbReference>
<dbReference type="GO" id="GO:0005737">
    <property type="term" value="C:cytoplasm"/>
    <property type="evidence" value="ECO:0007669"/>
    <property type="project" value="UniProtKB-SubCell"/>
</dbReference>
<dbReference type="GO" id="GO:0004414">
    <property type="term" value="F:homoserine O-acetyltransferase activity"/>
    <property type="evidence" value="ECO:0007669"/>
    <property type="project" value="UniProtKB-UniRule"/>
</dbReference>
<dbReference type="GO" id="GO:0009092">
    <property type="term" value="P:homoserine metabolic process"/>
    <property type="evidence" value="ECO:0007669"/>
    <property type="project" value="TreeGrafter"/>
</dbReference>
<dbReference type="GO" id="GO:0009086">
    <property type="term" value="P:methionine biosynthetic process"/>
    <property type="evidence" value="ECO:0007669"/>
    <property type="project" value="UniProtKB-UniRule"/>
</dbReference>
<dbReference type="FunFam" id="1.10.1740.110:FF:000001">
    <property type="entry name" value="Homoserine O-acetyltransferase"/>
    <property type="match status" value="1"/>
</dbReference>
<dbReference type="Gene3D" id="1.10.1740.110">
    <property type="match status" value="1"/>
</dbReference>
<dbReference type="Gene3D" id="3.40.50.1820">
    <property type="entry name" value="alpha/beta hydrolase"/>
    <property type="match status" value="1"/>
</dbReference>
<dbReference type="HAMAP" id="MF_00296">
    <property type="entry name" value="MetX_acyltransf"/>
    <property type="match status" value="1"/>
</dbReference>
<dbReference type="InterPro" id="IPR000073">
    <property type="entry name" value="AB_hydrolase_1"/>
</dbReference>
<dbReference type="InterPro" id="IPR029058">
    <property type="entry name" value="AB_hydrolase_fold"/>
</dbReference>
<dbReference type="InterPro" id="IPR008220">
    <property type="entry name" value="HAT_MetX-like"/>
</dbReference>
<dbReference type="NCBIfam" id="TIGR01392">
    <property type="entry name" value="homoserO_Ac_trn"/>
    <property type="match status" value="1"/>
</dbReference>
<dbReference type="NCBIfam" id="NF001209">
    <property type="entry name" value="PRK00175.1"/>
    <property type="match status" value="1"/>
</dbReference>
<dbReference type="PANTHER" id="PTHR32268">
    <property type="entry name" value="HOMOSERINE O-ACETYLTRANSFERASE"/>
    <property type="match status" value="1"/>
</dbReference>
<dbReference type="PANTHER" id="PTHR32268:SF11">
    <property type="entry name" value="HOMOSERINE O-ACETYLTRANSFERASE"/>
    <property type="match status" value="1"/>
</dbReference>
<dbReference type="Pfam" id="PF00561">
    <property type="entry name" value="Abhydrolase_1"/>
    <property type="match status" value="1"/>
</dbReference>
<dbReference type="PIRSF" id="PIRSF000443">
    <property type="entry name" value="Homoser_Ac_trans"/>
    <property type="match status" value="1"/>
</dbReference>
<dbReference type="SUPFAM" id="SSF53474">
    <property type="entry name" value="alpha/beta-Hydrolases"/>
    <property type="match status" value="1"/>
</dbReference>
<name>METXA_SYMTH</name>
<protein>
    <recommendedName>
        <fullName evidence="1">Homoserine O-acetyltransferase</fullName>
        <shortName evidence="1">HAT</shortName>
        <ecNumber evidence="1">2.3.1.31</ecNumber>
    </recommendedName>
    <alternativeName>
        <fullName evidence="1">Homoserine transacetylase</fullName>
        <shortName evidence="1">HTA</shortName>
    </alternativeName>
</protein>